<sequence>RFKKIRRLGALPGLTNKRPRSGSDLKNQLRSGKRSQYRIRLEEKQKLRFHYGLTERQLLKYVHIAGKAKGSTGQVLLQLLEMRLDNILFRLGMASTIPGARQLVNHRHILVNGRIVDIPSYRCKPRDIITTKDKQRSKALIQNSIASSPHEELPNHLTIDPFQYKGLVNQIIDSKWIGLKIN</sequence>
<comment type="function">
    <text evidence="1">One of the primary rRNA binding proteins, it binds directly to 16S rRNA where it nucleates assembly of the body of the 30S subunit.</text>
</comment>
<comment type="function">
    <text evidence="1">With S5 and S12 plays an important role in translational accuracy.</text>
</comment>
<comment type="subunit">
    <text evidence="1">Part of the 30S ribosomal subunit. Contacts protein S5. The interaction surface between S4 and S5 is involved in control of translational fidelity (By similarity).</text>
</comment>
<comment type="subcellular location">
    <subcellularLocation>
        <location>Plastid</location>
        <location>Chloroplast</location>
    </subcellularLocation>
</comment>
<comment type="similarity">
    <text evidence="2">Belongs to the universal ribosomal protein uS4 family.</text>
</comment>
<evidence type="ECO:0000250" key="1"/>
<evidence type="ECO:0000305" key="2"/>
<dbReference type="EMBL" id="Z68245">
    <property type="protein sequence ID" value="CAA92543.1"/>
    <property type="molecule type" value="Genomic_DNA"/>
</dbReference>
<dbReference type="SMR" id="O20254"/>
<dbReference type="GO" id="GO:0009507">
    <property type="term" value="C:chloroplast"/>
    <property type="evidence" value="ECO:0007669"/>
    <property type="project" value="UniProtKB-SubCell"/>
</dbReference>
<dbReference type="GO" id="GO:0015935">
    <property type="term" value="C:small ribosomal subunit"/>
    <property type="evidence" value="ECO:0007669"/>
    <property type="project" value="InterPro"/>
</dbReference>
<dbReference type="GO" id="GO:0019843">
    <property type="term" value="F:rRNA binding"/>
    <property type="evidence" value="ECO:0007669"/>
    <property type="project" value="UniProtKB-KW"/>
</dbReference>
<dbReference type="GO" id="GO:0003735">
    <property type="term" value="F:structural constituent of ribosome"/>
    <property type="evidence" value="ECO:0007669"/>
    <property type="project" value="InterPro"/>
</dbReference>
<dbReference type="GO" id="GO:0042274">
    <property type="term" value="P:ribosomal small subunit biogenesis"/>
    <property type="evidence" value="ECO:0007669"/>
    <property type="project" value="TreeGrafter"/>
</dbReference>
<dbReference type="GO" id="GO:0006412">
    <property type="term" value="P:translation"/>
    <property type="evidence" value="ECO:0007669"/>
    <property type="project" value="InterPro"/>
</dbReference>
<dbReference type="CDD" id="cd00165">
    <property type="entry name" value="S4"/>
    <property type="match status" value="1"/>
</dbReference>
<dbReference type="FunFam" id="1.10.1050.10:FF:000002">
    <property type="entry name" value="30S ribosomal protein S4, chloroplastic"/>
    <property type="match status" value="1"/>
</dbReference>
<dbReference type="FunFam" id="3.10.290.10:FF:000081">
    <property type="entry name" value="30S ribosomal protein S4, chloroplastic"/>
    <property type="match status" value="1"/>
</dbReference>
<dbReference type="Gene3D" id="1.10.1050.10">
    <property type="entry name" value="Ribosomal Protein S4 Delta 41, Chain A, domain 1"/>
    <property type="match status" value="1"/>
</dbReference>
<dbReference type="Gene3D" id="3.10.290.10">
    <property type="entry name" value="RNA-binding S4 domain"/>
    <property type="match status" value="1"/>
</dbReference>
<dbReference type="HAMAP" id="MF_01306_B">
    <property type="entry name" value="Ribosomal_uS4_B"/>
    <property type="match status" value="1"/>
</dbReference>
<dbReference type="InterPro" id="IPR022801">
    <property type="entry name" value="Ribosomal_uS4"/>
</dbReference>
<dbReference type="InterPro" id="IPR005709">
    <property type="entry name" value="Ribosomal_uS4_bac-type"/>
</dbReference>
<dbReference type="InterPro" id="IPR018079">
    <property type="entry name" value="Ribosomal_uS4_CS"/>
</dbReference>
<dbReference type="InterPro" id="IPR001912">
    <property type="entry name" value="Ribosomal_uS4_N"/>
</dbReference>
<dbReference type="InterPro" id="IPR002942">
    <property type="entry name" value="S4_RNA-bd"/>
</dbReference>
<dbReference type="InterPro" id="IPR036986">
    <property type="entry name" value="S4_RNA-bd_sf"/>
</dbReference>
<dbReference type="NCBIfam" id="NF003717">
    <property type="entry name" value="PRK05327.1"/>
    <property type="match status" value="1"/>
</dbReference>
<dbReference type="NCBIfam" id="TIGR01017">
    <property type="entry name" value="rpsD_bact"/>
    <property type="match status" value="1"/>
</dbReference>
<dbReference type="PANTHER" id="PTHR11831">
    <property type="entry name" value="30S 40S RIBOSOMAL PROTEIN"/>
    <property type="match status" value="1"/>
</dbReference>
<dbReference type="PANTHER" id="PTHR11831:SF4">
    <property type="entry name" value="SMALL RIBOSOMAL SUBUNIT PROTEIN US4M"/>
    <property type="match status" value="1"/>
</dbReference>
<dbReference type="Pfam" id="PF00163">
    <property type="entry name" value="Ribosomal_S4"/>
    <property type="match status" value="1"/>
</dbReference>
<dbReference type="Pfam" id="PF01479">
    <property type="entry name" value="S4"/>
    <property type="match status" value="1"/>
</dbReference>
<dbReference type="SMART" id="SM01390">
    <property type="entry name" value="Ribosomal_S4"/>
    <property type="match status" value="1"/>
</dbReference>
<dbReference type="SMART" id="SM00363">
    <property type="entry name" value="S4"/>
    <property type="match status" value="1"/>
</dbReference>
<dbReference type="SUPFAM" id="SSF55174">
    <property type="entry name" value="Alpha-L RNA-binding motif"/>
    <property type="match status" value="1"/>
</dbReference>
<dbReference type="PROSITE" id="PS00632">
    <property type="entry name" value="RIBOSOMAL_S4"/>
    <property type="match status" value="1"/>
</dbReference>
<dbReference type="PROSITE" id="PS50889">
    <property type="entry name" value="S4"/>
    <property type="match status" value="1"/>
</dbReference>
<keyword id="KW-0150">Chloroplast</keyword>
<keyword id="KW-0934">Plastid</keyword>
<keyword id="KW-0687">Ribonucleoprotein</keyword>
<keyword id="KW-0689">Ribosomal protein</keyword>
<keyword id="KW-0694">RNA-binding</keyword>
<keyword id="KW-0699">rRNA-binding</keyword>
<name>RR4_LIBFO</name>
<gene>
    <name type="primary">rps4</name>
</gene>
<reference key="1">
    <citation type="journal article" date="1997" name="Plant Syst. Evol.">
        <title>Phylogenetic analysis of Iridaceae with parsimony and distance methods using the plastid gene rps4.</title>
        <authorList>
            <person name="Souza-Chies T.T."/>
            <person name="Bittar G."/>
            <person name="Nadot S."/>
            <person name="Carter L."/>
            <person name="Besin E."/>
            <person name="Lejeune B.P."/>
        </authorList>
    </citation>
    <scope>NUCLEOTIDE SEQUENCE [GENOMIC DNA]</scope>
</reference>
<accession>O20254</accession>
<geneLocation type="chloroplast"/>
<organism>
    <name type="scientific">Libertia formosa</name>
    <name type="common">Snowy mermaid</name>
    <dbReference type="NCBI Taxonomy" id="58960"/>
    <lineage>
        <taxon>Eukaryota</taxon>
        <taxon>Viridiplantae</taxon>
        <taxon>Streptophyta</taxon>
        <taxon>Embryophyta</taxon>
        <taxon>Tracheophyta</taxon>
        <taxon>Spermatophyta</taxon>
        <taxon>Magnoliopsida</taxon>
        <taxon>Liliopsida</taxon>
        <taxon>Asparagales</taxon>
        <taxon>Iridaceae</taxon>
        <taxon>Iridoideae</taxon>
        <taxon>Sisyrinchieae</taxon>
        <taxon>Libertia</taxon>
    </lineage>
</organism>
<proteinExistence type="inferred from homology"/>
<protein>
    <recommendedName>
        <fullName evidence="2">Small ribosomal subunit protein uS4c</fullName>
    </recommendedName>
    <alternativeName>
        <fullName>30S ribosomal protein S4, chloroplastic</fullName>
    </alternativeName>
</protein>
<feature type="chain" id="PRO_0000132618" description="Small ribosomal subunit protein uS4c">
    <location>
        <begin position="1" status="less than"/>
        <end position="182" status="greater than"/>
    </location>
</feature>
<feature type="domain" description="S4 RNA-binding">
    <location>
        <begin position="82"/>
        <end position="143"/>
    </location>
</feature>
<feature type="non-terminal residue">
    <location>
        <position position="1"/>
    </location>
</feature>
<feature type="non-terminal residue">
    <location>
        <position position="182"/>
    </location>
</feature>